<sequence>MANDCKCPNGCSCPNCANGGCQCGDKCECKKQSCHGCGEQCKCGSHGSSCHGSCGCGDKCECK</sequence>
<gene>
    <name type="primary">MT-I</name>
    <name type="ordered locus">CAGL0D01265g</name>
</gene>
<protein>
    <recommendedName>
        <fullName>Metallothionein-1</fullName>
        <shortName>MT-1</shortName>
    </recommendedName>
    <alternativeName>
        <fullName>Metallothionein-I</fullName>
        <shortName>MT-I</shortName>
    </alternativeName>
</protein>
<dbReference type="EMBL" id="J05133">
    <property type="protein sequence ID" value="AAA35272.1"/>
    <property type="molecule type" value="Genomic_DNA"/>
</dbReference>
<dbReference type="EMBL" id="CR380950">
    <property type="protein sequence ID" value="CAR58010.1"/>
    <property type="molecule type" value="Genomic_DNA"/>
</dbReference>
<dbReference type="PIR" id="A31252">
    <property type="entry name" value="A31252"/>
</dbReference>
<dbReference type="PIR" id="A34484">
    <property type="entry name" value="A34484"/>
</dbReference>
<dbReference type="RefSeq" id="XP_002999527.1">
    <property type="nucleotide sequence ID" value="XM_002999481.1"/>
</dbReference>
<dbReference type="STRING" id="284593.P15113"/>
<dbReference type="EnsemblFungi" id="CAGL0D01265g-T">
    <property type="protein sequence ID" value="CAGL0D01265g-T-p1"/>
    <property type="gene ID" value="CAGL0D01265g"/>
</dbReference>
<dbReference type="GeneID" id="9487975"/>
<dbReference type="KEGG" id="cgr:9487975"/>
<dbReference type="CGD" id="CAL0128003">
    <property type="gene designation" value="MT-I"/>
</dbReference>
<dbReference type="VEuPathDB" id="FungiDB:B1J91_D01265g"/>
<dbReference type="VEuPathDB" id="FungiDB:CAGL0D01265g"/>
<dbReference type="HOGENOM" id="CLU_2932354_0_0_1"/>
<dbReference type="InParanoid" id="P15113"/>
<dbReference type="OMA" id="GDKCECK"/>
<dbReference type="Proteomes" id="UP000002428">
    <property type="component" value="Chromosome D"/>
</dbReference>
<dbReference type="GO" id="GO:0005507">
    <property type="term" value="F:copper ion binding"/>
    <property type="evidence" value="ECO:0000314"/>
    <property type="project" value="CGD"/>
</dbReference>
<dbReference type="GO" id="GO:0071280">
    <property type="term" value="P:cellular response to copper ion"/>
    <property type="evidence" value="ECO:0000314"/>
    <property type="project" value="CGD"/>
</dbReference>
<dbReference type="GO" id="GO:0071292">
    <property type="term" value="P:cellular response to silver ion"/>
    <property type="evidence" value="ECO:0000314"/>
    <property type="project" value="CGD"/>
</dbReference>
<organism>
    <name type="scientific">Candida glabrata (strain ATCC 2001 / BCRC 20586 / JCM 3761 / NBRC 0622 / NRRL Y-65 / CBS 138)</name>
    <name type="common">Yeast</name>
    <name type="synonym">Nakaseomyces glabratus</name>
    <dbReference type="NCBI Taxonomy" id="284593"/>
    <lineage>
        <taxon>Eukaryota</taxon>
        <taxon>Fungi</taxon>
        <taxon>Dikarya</taxon>
        <taxon>Ascomycota</taxon>
        <taxon>Saccharomycotina</taxon>
        <taxon>Saccharomycetes</taxon>
        <taxon>Saccharomycetales</taxon>
        <taxon>Saccharomycetaceae</taxon>
        <taxon>Nakaseomyces</taxon>
    </lineage>
</organism>
<reference key="1">
    <citation type="journal article" date="1989" name="J. Biol. Chem.">
        <title>Candida glabrata metallothioneins. Cloning and sequence of the genes and characterization of proteins.</title>
        <authorList>
            <person name="Mehra R.K."/>
            <person name="Garey J.R."/>
            <person name="Butt T.R."/>
            <person name="Gray W.R."/>
            <person name="Winge D.R."/>
        </authorList>
    </citation>
    <scope>NUCLEOTIDE SEQUENCE [GENOMIC DNA]</scope>
</reference>
<reference key="2">
    <citation type="journal article" date="2004" name="Nature">
        <title>Genome evolution in yeasts.</title>
        <authorList>
            <person name="Dujon B."/>
            <person name="Sherman D."/>
            <person name="Fischer G."/>
            <person name="Durrens P."/>
            <person name="Casaregola S."/>
            <person name="Lafontaine I."/>
            <person name="de Montigny J."/>
            <person name="Marck C."/>
            <person name="Neuveglise C."/>
            <person name="Talla E."/>
            <person name="Goffard N."/>
            <person name="Frangeul L."/>
            <person name="Aigle M."/>
            <person name="Anthouard V."/>
            <person name="Babour A."/>
            <person name="Barbe V."/>
            <person name="Barnay S."/>
            <person name="Blanchin S."/>
            <person name="Beckerich J.-M."/>
            <person name="Beyne E."/>
            <person name="Bleykasten C."/>
            <person name="Boisrame A."/>
            <person name="Boyer J."/>
            <person name="Cattolico L."/>
            <person name="Confanioleri F."/>
            <person name="de Daruvar A."/>
            <person name="Despons L."/>
            <person name="Fabre E."/>
            <person name="Fairhead C."/>
            <person name="Ferry-Dumazet H."/>
            <person name="Groppi A."/>
            <person name="Hantraye F."/>
            <person name="Hennequin C."/>
            <person name="Jauniaux N."/>
            <person name="Joyet P."/>
            <person name="Kachouri R."/>
            <person name="Kerrest A."/>
            <person name="Koszul R."/>
            <person name="Lemaire M."/>
            <person name="Lesur I."/>
            <person name="Ma L."/>
            <person name="Muller H."/>
            <person name="Nicaud J.-M."/>
            <person name="Nikolski M."/>
            <person name="Oztas S."/>
            <person name="Ozier-Kalogeropoulos O."/>
            <person name="Pellenz S."/>
            <person name="Potier S."/>
            <person name="Richard G.-F."/>
            <person name="Straub M.-L."/>
            <person name="Suleau A."/>
            <person name="Swennen D."/>
            <person name="Tekaia F."/>
            <person name="Wesolowski-Louvel M."/>
            <person name="Westhof E."/>
            <person name="Wirth B."/>
            <person name="Zeniou-Meyer M."/>
            <person name="Zivanovic Y."/>
            <person name="Bolotin-Fukuhara M."/>
            <person name="Thierry A."/>
            <person name="Bouchier C."/>
            <person name="Caudron B."/>
            <person name="Scarpelli C."/>
            <person name="Gaillardin C."/>
            <person name="Weissenbach J."/>
            <person name="Wincker P."/>
            <person name="Souciet J.-L."/>
        </authorList>
    </citation>
    <scope>NUCLEOTIDE SEQUENCE [LARGE SCALE GENOMIC DNA]</scope>
    <source>
        <strain>ATCC 2001 / BCRC 20586 / JCM 3761 / NBRC 0622 / NRRL Y-65 / CBS 138</strain>
    </source>
</reference>
<reference key="3">
    <citation type="journal article" date="1988" name="Proc. Natl. Acad. Sci. U.S.A.">
        <title>Metal-specific synthesis of two metallothioneins and gamma-glutamyl peptides in Candida glabrata.</title>
        <authorList>
            <person name="Mehra R.K."/>
            <person name="Tarbet B.E."/>
            <person name="Gray W.R."/>
            <person name="Winge D.R."/>
        </authorList>
    </citation>
    <scope>PROTEIN SEQUENCE OF 2-17</scope>
</reference>
<name>MT1_CANGA</name>
<comment type="function">
    <text>The metallothioneins are involved in the cellular sequestration of toxic metal ions.</text>
</comment>
<comment type="induction">
    <text>Both MT-I and MT-II genes are regulated by copper ion in a concentration-dependent fashion, and both are inducible by silver but not by cadmium salts.</text>
</comment>
<comment type="miscellaneous">
    <text>MT-I might bind approximately 11-12 mol eq of Cu(+).</text>
</comment>
<comment type="similarity">
    <text evidence="2">Belongs to the metallothionein superfamily. Type 9 family.</text>
</comment>
<proteinExistence type="evidence at protein level"/>
<feature type="initiator methionine" description="Removed" evidence="1">
    <location>
        <position position="1"/>
    </location>
</feature>
<feature type="chain" id="PRO_0000197365" description="Metallothionein-1">
    <location>
        <begin position="2"/>
        <end position="63"/>
    </location>
</feature>
<feature type="repeat">
    <location>
        <begin position="23"/>
        <end position="30"/>
    </location>
</feature>
<feature type="repeat">
    <location>
        <begin position="56"/>
        <end position="63"/>
    </location>
</feature>
<evidence type="ECO:0000269" key="1">
    <source>
    </source>
</evidence>
<evidence type="ECO:0000305" key="2"/>
<keyword id="KW-0186">Copper</keyword>
<keyword id="KW-0903">Direct protein sequencing</keyword>
<keyword id="KW-0479">Metal-binding</keyword>
<keyword id="KW-0480">Metal-thiolate cluster</keyword>
<keyword id="KW-1185">Reference proteome</keyword>
<keyword id="KW-0677">Repeat</keyword>
<accession>P15113</accession>
<accession>B4UMY6</accession>